<name>CCDP_MAIZE</name>
<comment type="function">
    <text>Delineates a novel subset of developing cortical cells. It is probably involved in some aspect of transport of molecules to or from the vasculature.</text>
</comment>
<comment type="tissue specificity">
    <text>Cortical ground meristem of developing roots.</text>
</comment>
<comment type="similarity">
    <text evidence="2">To carrot DC2.15 and PEMB3.</text>
</comment>
<proteinExistence type="evidence at transcript level"/>
<accession>Q01595</accession>
<evidence type="ECO:0000255" key="1"/>
<evidence type="ECO:0000305" key="2"/>
<keyword id="KW-0325">Glycoprotein</keyword>
<keyword id="KW-1185">Reference proteome</keyword>
<keyword id="KW-0677">Repeat</keyword>
<keyword id="KW-0732">Signal</keyword>
<organism>
    <name type="scientific">Zea mays</name>
    <name type="common">Maize</name>
    <dbReference type="NCBI Taxonomy" id="4577"/>
    <lineage>
        <taxon>Eukaryota</taxon>
        <taxon>Viridiplantae</taxon>
        <taxon>Streptophyta</taxon>
        <taxon>Embryophyta</taxon>
        <taxon>Tracheophyta</taxon>
        <taxon>Spermatophyta</taxon>
        <taxon>Magnoliopsida</taxon>
        <taxon>Liliopsida</taxon>
        <taxon>Poales</taxon>
        <taxon>Poaceae</taxon>
        <taxon>PACMAD clade</taxon>
        <taxon>Panicoideae</taxon>
        <taxon>Andropogonodae</taxon>
        <taxon>Andropogoneae</taxon>
        <taxon>Tripsacinae</taxon>
        <taxon>Zea</taxon>
    </lineage>
</organism>
<feature type="signal peptide" description="Or 21" evidence="1">
    <location>
        <begin position="1"/>
        <end position="19"/>
    </location>
</feature>
<feature type="chain" id="PRO_0000020864" description="Cortical cell-delineating protein">
    <location>
        <begin position="20"/>
        <end position="129"/>
    </location>
</feature>
<feature type="repeat" description="1">
    <location>
        <begin position="29"/>
        <end position="34"/>
    </location>
</feature>
<feature type="repeat" description="2">
    <location>
        <begin position="35"/>
        <end position="40"/>
    </location>
</feature>
<feature type="region of interest" description="2 X 6 AA tandem repeats of P-V-V-P-T-P">
    <location>
        <begin position="29"/>
        <end position="40"/>
    </location>
</feature>
<feature type="glycosylation site" description="N-linked (GlcNAc...) asparagine" evidence="1">
    <location>
        <position position="25"/>
    </location>
</feature>
<protein>
    <recommendedName>
        <fullName>Cortical cell-delineating protein</fullName>
    </recommendedName>
    <alternativeName>
        <fullName>Root-specific protein ZRP3</fullName>
    </alternativeName>
</protein>
<dbReference type="EMBL" id="Z12103">
    <property type="protein sequence ID" value="CAA78088.1"/>
    <property type="molecule type" value="mRNA"/>
</dbReference>
<dbReference type="PIR" id="S28009">
    <property type="entry name" value="S28009"/>
</dbReference>
<dbReference type="SMR" id="Q01595"/>
<dbReference type="FunCoup" id="Q01595">
    <property type="interactions" value="9"/>
</dbReference>
<dbReference type="PaxDb" id="4577-AC234161.1_FGP001"/>
<dbReference type="MaizeGDB" id="65581"/>
<dbReference type="eggNOG" id="ENOG502RRNN">
    <property type="taxonomic scope" value="Eukaryota"/>
</dbReference>
<dbReference type="InParanoid" id="Q01595"/>
<dbReference type="Proteomes" id="UP000007305">
    <property type="component" value="Unplaced"/>
</dbReference>
<dbReference type="ExpressionAtlas" id="Q01595">
    <property type="expression patterns" value="baseline and differential"/>
</dbReference>
<dbReference type="CDD" id="cd01958">
    <property type="entry name" value="HPS_like"/>
    <property type="match status" value="1"/>
</dbReference>
<dbReference type="Gene3D" id="1.10.110.10">
    <property type="entry name" value="Plant lipid-transfer and hydrophobic proteins"/>
    <property type="match status" value="1"/>
</dbReference>
<dbReference type="InterPro" id="IPR036312">
    <property type="entry name" value="Bifun_inhib/LTP/seed_sf"/>
</dbReference>
<dbReference type="InterPro" id="IPR016140">
    <property type="entry name" value="Bifunc_inhib/LTP/seed_store"/>
</dbReference>
<dbReference type="InterPro" id="IPR027923">
    <property type="entry name" value="Hydrophob_seed_dom"/>
</dbReference>
<dbReference type="InterPro" id="IPR051636">
    <property type="entry name" value="Plant_LTP/defense-related"/>
</dbReference>
<dbReference type="PANTHER" id="PTHR31731">
    <property type="match status" value="1"/>
</dbReference>
<dbReference type="Pfam" id="PF14547">
    <property type="entry name" value="Hydrophob_seed"/>
    <property type="match status" value="1"/>
</dbReference>
<dbReference type="SMART" id="SM00499">
    <property type="entry name" value="AAI"/>
    <property type="match status" value="1"/>
</dbReference>
<dbReference type="SUPFAM" id="SSF47699">
    <property type="entry name" value="Bifunctional inhibitor/lipid-transfer protein/seed storage 2S albumin"/>
    <property type="match status" value="1"/>
</dbReference>
<reference key="1">
    <citation type="journal article" date="1992" name="Plant Mol. Biol.">
        <title>An mRNA that specifically accumulates in maize roots delineates a novel subset of developing cortical cells.</title>
        <authorList>
            <person name="John I."/>
            <person name="Wang H."/>
            <person name="Held B.M."/>
            <person name="Wurtele E.S."/>
            <person name="Colbert J.T."/>
        </authorList>
    </citation>
    <scope>NUCLEOTIDE SEQUENCE [MRNA]</scope>
    <source>
        <strain>cv. NKH31</strain>
        <tissue>Root</tissue>
    </source>
</reference>
<sequence>MAPKVALFLALSLLFAATAHGCEPNCSGPVVPTPPVVPTPSSHSHGRCPIDALKLKVCAKVLGLVKVGLPQYEQCCPLLEGLVDLDAALCLCTAIKANVLGIHLNVPLSLNFILNNCGRICPEDFTCPN</sequence>